<proteinExistence type="inferred from homology"/>
<protein>
    <recommendedName>
        <fullName evidence="1">HTH-type transcriptional activator RhaS</fullName>
    </recommendedName>
    <alternativeName>
        <fullName evidence="1">L-rhamnose operon regulatory protein RhaS</fullName>
    </alternativeName>
</protein>
<reference key="1">
    <citation type="submission" date="2008-02" db="EMBL/GenBank/DDBJ databases">
        <title>Complete sequence of Escherichia coli C str. ATCC 8739.</title>
        <authorList>
            <person name="Copeland A."/>
            <person name="Lucas S."/>
            <person name="Lapidus A."/>
            <person name="Glavina del Rio T."/>
            <person name="Dalin E."/>
            <person name="Tice H."/>
            <person name="Bruce D."/>
            <person name="Goodwin L."/>
            <person name="Pitluck S."/>
            <person name="Kiss H."/>
            <person name="Brettin T."/>
            <person name="Detter J.C."/>
            <person name="Han C."/>
            <person name="Kuske C.R."/>
            <person name="Schmutz J."/>
            <person name="Larimer F."/>
            <person name="Land M."/>
            <person name="Hauser L."/>
            <person name="Kyrpides N."/>
            <person name="Mikhailova N."/>
            <person name="Ingram L."/>
            <person name="Richardson P."/>
        </authorList>
    </citation>
    <scope>NUCLEOTIDE SEQUENCE [LARGE SCALE GENOMIC DNA]</scope>
    <source>
        <strain>ATCC 8739 / DSM 1576 / NBRC 3972 / NCIMB 8545 / WDCM 00012 / Crooks</strain>
    </source>
</reference>
<feature type="chain" id="PRO_1000087598" description="HTH-type transcriptional activator RhaS">
    <location>
        <begin position="1"/>
        <end position="278"/>
    </location>
</feature>
<feature type="domain" description="HTH araC/xylS-type" evidence="1">
    <location>
        <begin position="174"/>
        <end position="272"/>
    </location>
</feature>
<feature type="DNA-binding region" description="H-T-H motif" evidence="1">
    <location>
        <begin position="191"/>
        <end position="212"/>
    </location>
</feature>
<feature type="DNA-binding region" description="H-T-H motif" evidence="1">
    <location>
        <begin position="239"/>
        <end position="262"/>
    </location>
</feature>
<feature type="site" description="Interaction with sigma-70" evidence="1">
    <location>
        <position position="241"/>
    </location>
</feature>
<feature type="site" description="Interaction with sigma-70" evidence="1">
    <location>
        <position position="250"/>
    </location>
</feature>
<comment type="function">
    <text evidence="1">Activates expression of the rhaBAD and rhaT operons.</text>
</comment>
<comment type="subunit">
    <text evidence="1">Binds DNA as a dimer.</text>
</comment>
<comment type="subcellular location">
    <subcellularLocation>
        <location evidence="1">Cytoplasm</location>
    </subcellularLocation>
</comment>
<sequence>MTVLHSVDFFPSGNASVAIEPRLPQADFPEHHHDFHEIVIVEHGTGIHVFNGQPYTITGGTVCFVRDHDRHLYEHTDNLCLTNVLYRSPDRFQFLAGLNQLLPQELDGQYPSHWRVNHSVLQQVRQLVAQMEQQEGENDLPSTASREILFMQLLLLLRKSSLQENLENSASRLNLLLAWLEDHFADEVNWDAVADQFSLSLRTLHRQLKQQTGLTPQRYLNRLRLMKARHLLRHSEASVTDIAYRCGFSDSNHFSTLFRREFNWSPRDIRQGRDGFLQ</sequence>
<name>RHAS_ECOLC</name>
<dbReference type="EMBL" id="CP000946">
    <property type="protein sequence ID" value="ACA79710.1"/>
    <property type="molecule type" value="Genomic_DNA"/>
</dbReference>
<dbReference type="RefSeq" id="WP_000217137.1">
    <property type="nucleotide sequence ID" value="NZ_MTFT01000008.1"/>
</dbReference>
<dbReference type="SMR" id="B1IVH3"/>
<dbReference type="GeneID" id="75204579"/>
<dbReference type="KEGG" id="ecl:EcolC_4112"/>
<dbReference type="HOGENOM" id="CLU_000445_88_5_6"/>
<dbReference type="GO" id="GO:0005737">
    <property type="term" value="C:cytoplasm"/>
    <property type="evidence" value="ECO:0007669"/>
    <property type="project" value="UniProtKB-SubCell"/>
</dbReference>
<dbReference type="GO" id="GO:0003700">
    <property type="term" value="F:DNA-binding transcription factor activity"/>
    <property type="evidence" value="ECO:0007669"/>
    <property type="project" value="UniProtKB-UniRule"/>
</dbReference>
<dbReference type="GO" id="GO:0043565">
    <property type="term" value="F:sequence-specific DNA binding"/>
    <property type="evidence" value="ECO:0007669"/>
    <property type="project" value="InterPro"/>
</dbReference>
<dbReference type="GO" id="GO:0045893">
    <property type="term" value="P:positive regulation of DNA-templated transcription"/>
    <property type="evidence" value="ECO:0007669"/>
    <property type="project" value="UniProtKB-UniRule"/>
</dbReference>
<dbReference type="GO" id="GO:0019299">
    <property type="term" value="P:rhamnose metabolic process"/>
    <property type="evidence" value="ECO:0007669"/>
    <property type="project" value="UniProtKB-UniRule"/>
</dbReference>
<dbReference type="CDD" id="cd06977">
    <property type="entry name" value="cupin_RhaR_RhaS-like_N"/>
    <property type="match status" value="1"/>
</dbReference>
<dbReference type="FunFam" id="1.10.10.60:FF:000181">
    <property type="entry name" value="HTH-type transcriptional activator RhaS"/>
    <property type="match status" value="1"/>
</dbReference>
<dbReference type="FunFam" id="2.60.120.10:FF:000041">
    <property type="entry name" value="HTH-type transcriptional activator RhaS"/>
    <property type="match status" value="1"/>
</dbReference>
<dbReference type="Gene3D" id="1.10.10.60">
    <property type="entry name" value="Homeodomain-like"/>
    <property type="match status" value="1"/>
</dbReference>
<dbReference type="Gene3D" id="2.60.120.10">
    <property type="entry name" value="Jelly Rolls"/>
    <property type="match status" value="1"/>
</dbReference>
<dbReference type="HAMAP" id="MF_01534">
    <property type="entry name" value="HTH_type_RhaS"/>
    <property type="match status" value="1"/>
</dbReference>
<dbReference type="InterPro" id="IPR003313">
    <property type="entry name" value="AraC-bd"/>
</dbReference>
<dbReference type="InterPro" id="IPR050204">
    <property type="entry name" value="AraC_XylS_family_regulators"/>
</dbReference>
<dbReference type="InterPro" id="IPR009057">
    <property type="entry name" value="Homeodomain-like_sf"/>
</dbReference>
<dbReference type="InterPro" id="IPR037923">
    <property type="entry name" value="HTH-like"/>
</dbReference>
<dbReference type="InterPro" id="IPR018060">
    <property type="entry name" value="HTH_AraC"/>
</dbReference>
<dbReference type="InterPro" id="IPR018062">
    <property type="entry name" value="HTH_AraC-typ_CS"/>
</dbReference>
<dbReference type="InterPro" id="IPR047220">
    <property type="entry name" value="RhaR_RhaS-like_N"/>
</dbReference>
<dbReference type="InterPro" id="IPR014710">
    <property type="entry name" value="RmlC-like_jellyroll"/>
</dbReference>
<dbReference type="InterPro" id="IPR020449">
    <property type="entry name" value="Tscrpt_reg_AraC-type_HTH"/>
</dbReference>
<dbReference type="InterPro" id="IPR023609">
    <property type="entry name" value="Tscrpt_reg_HTH_RhaS"/>
</dbReference>
<dbReference type="NCBIfam" id="NF010028">
    <property type="entry name" value="PRK13503.1"/>
    <property type="match status" value="1"/>
</dbReference>
<dbReference type="PANTHER" id="PTHR46796:SF13">
    <property type="entry name" value="HTH-TYPE TRANSCRIPTIONAL ACTIVATOR RHAS"/>
    <property type="match status" value="1"/>
</dbReference>
<dbReference type="PANTHER" id="PTHR46796">
    <property type="entry name" value="HTH-TYPE TRANSCRIPTIONAL ACTIVATOR RHAS-RELATED"/>
    <property type="match status" value="1"/>
</dbReference>
<dbReference type="Pfam" id="PF02311">
    <property type="entry name" value="AraC_binding"/>
    <property type="match status" value="1"/>
</dbReference>
<dbReference type="Pfam" id="PF12833">
    <property type="entry name" value="HTH_18"/>
    <property type="match status" value="1"/>
</dbReference>
<dbReference type="PRINTS" id="PR00032">
    <property type="entry name" value="HTHARAC"/>
</dbReference>
<dbReference type="SMART" id="SM00342">
    <property type="entry name" value="HTH_ARAC"/>
    <property type="match status" value="1"/>
</dbReference>
<dbReference type="SUPFAM" id="SSF46689">
    <property type="entry name" value="Homeodomain-like"/>
    <property type="match status" value="2"/>
</dbReference>
<dbReference type="SUPFAM" id="SSF51215">
    <property type="entry name" value="Regulatory protein AraC"/>
    <property type="match status" value="1"/>
</dbReference>
<dbReference type="PROSITE" id="PS00041">
    <property type="entry name" value="HTH_ARAC_FAMILY_1"/>
    <property type="match status" value="1"/>
</dbReference>
<dbReference type="PROSITE" id="PS01124">
    <property type="entry name" value="HTH_ARAC_FAMILY_2"/>
    <property type="match status" value="1"/>
</dbReference>
<keyword id="KW-0010">Activator</keyword>
<keyword id="KW-0963">Cytoplasm</keyword>
<keyword id="KW-0238">DNA-binding</keyword>
<keyword id="KW-0677">Repeat</keyword>
<keyword id="KW-0684">Rhamnose metabolism</keyword>
<keyword id="KW-0804">Transcription</keyword>
<keyword id="KW-0805">Transcription regulation</keyword>
<organism>
    <name type="scientific">Escherichia coli (strain ATCC 8739 / DSM 1576 / NBRC 3972 / NCIMB 8545 / WDCM 00012 / Crooks)</name>
    <dbReference type="NCBI Taxonomy" id="481805"/>
    <lineage>
        <taxon>Bacteria</taxon>
        <taxon>Pseudomonadati</taxon>
        <taxon>Pseudomonadota</taxon>
        <taxon>Gammaproteobacteria</taxon>
        <taxon>Enterobacterales</taxon>
        <taxon>Enterobacteriaceae</taxon>
        <taxon>Escherichia</taxon>
    </lineage>
</organism>
<evidence type="ECO:0000255" key="1">
    <source>
        <dbReference type="HAMAP-Rule" id="MF_01534"/>
    </source>
</evidence>
<accession>B1IVH3</accession>
<gene>
    <name evidence="1" type="primary">rhaS</name>
    <name type="ordered locus">EcolC_4112</name>
</gene>